<organism>
    <name type="scientific">Proteus mirabilis (strain HI4320)</name>
    <dbReference type="NCBI Taxonomy" id="529507"/>
    <lineage>
        <taxon>Bacteria</taxon>
        <taxon>Pseudomonadati</taxon>
        <taxon>Pseudomonadota</taxon>
        <taxon>Gammaproteobacteria</taxon>
        <taxon>Enterobacterales</taxon>
        <taxon>Morganellaceae</taxon>
        <taxon>Proteus</taxon>
    </lineage>
</organism>
<protein>
    <recommendedName>
        <fullName evidence="1">Large ribosomal subunit protein bL12</fullName>
    </recommendedName>
    <alternativeName>
        <fullName evidence="2">50S ribosomal protein L7/L12</fullName>
    </alternativeName>
</protein>
<sequence length="121" mass="12371">MSISKDDILNAVAEMSVMDVVELITMMEEKFGVSAAAAVAVAAGPAEAAEEKTEFDVILKGIGGNKVAVIKAVRGATGLGLKEAKDLVESAPAALKEGVSKDDAEALKKALEEAGAEVEVK</sequence>
<evidence type="ECO:0000255" key="1">
    <source>
        <dbReference type="HAMAP-Rule" id="MF_00368"/>
    </source>
</evidence>
<evidence type="ECO:0000305" key="2"/>
<proteinExistence type="inferred from homology"/>
<accession>B4EYV0</accession>
<name>RL7_PROMH</name>
<feature type="chain" id="PRO_1000121473" description="Large ribosomal subunit protein bL12">
    <location>
        <begin position="1"/>
        <end position="121"/>
    </location>
</feature>
<gene>
    <name evidence="1" type="primary">rplL</name>
    <name type="ordered locus">PMI2786</name>
</gene>
<dbReference type="EMBL" id="AM942759">
    <property type="protein sequence ID" value="CAR45498.1"/>
    <property type="molecule type" value="Genomic_DNA"/>
</dbReference>
<dbReference type="RefSeq" id="WP_004246905.1">
    <property type="nucleotide sequence ID" value="NC_010554.1"/>
</dbReference>
<dbReference type="SMR" id="B4EYV0"/>
<dbReference type="EnsemblBacteria" id="CAR45498">
    <property type="protein sequence ID" value="CAR45498"/>
    <property type="gene ID" value="PMI2786"/>
</dbReference>
<dbReference type="GeneID" id="6800338"/>
<dbReference type="KEGG" id="pmr:PMI2786"/>
<dbReference type="eggNOG" id="COG0222">
    <property type="taxonomic scope" value="Bacteria"/>
</dbReference>
<dbReference type="HOGENOM" id="CLU_086499_3_2_6"/>
<dbReference type="Proteomes" id="UP000008319">
    <property type="component" value="Chromosome"/>
</dbReference>
<dbReference type="GO" id="GO:0022625">
    <property type="term" value="C:cytosolic large ribosomal subunit"/>
    <property type="evidence" value="ECO:0007669"/>
    <property type="project" value="TreeGrafter"/>
</dbReference>
<dbReference type="GO" id="GO:0003729">
    <property type="term" value="F:mRNA binding"/>
    <property type="evidence" value="ECO:0007669"/>
    <property type="project" value="TreeGrafter"/>
</dbReference>
<dbReference type="GO" id="GO:0003735">
    <property type="term" value="F:structural constituent of ribosome"/>
    <property type="evidence" value="ECO:0007669"/>
    <property type="project" value="InterPro"/>
</dbReference>
<dbReference type="GO" id="GO:0006412">
    <property type="term" value="P:translation"/>
    <property type="evidence" value="ECO:0007669"/>
    <property type="project" value="UniProtKB-UniRule"/>
</dbReference>
<dbReference type="CDD" id="cd00387">
    <property type="entry name" value="Ribosomal_L7_L12"/>
    <property type="match status" value="1"/>
</dbReference>
<dbReference type="FunFam" id="1.20.5.710:FF:000001">
    <property type="entry name" value="50S ribosomal protein L7/L12"/>
    <property type="match status" value="1"/>
</dbReference>
<dbReference type="FunFam" id="3.30.1390.10:FF:000001">
    <property type="entry name" value="50S ribosomal protein L7/L12"/>
    <property type="match status" value="1"/>
</dbReference>
<dbReference type="Gene3D" id="3.30.1390.10">
    <property type="match status" value="1"/>
</dbReference>
<dbReference type="Gene3D" id="1.20.5.710">
    <property type="entry name" value="Single helix bin"/>
    <property type="match status" value="1"/>
</dbReference>
<dbReference type="HAMAP" id="MF_00368">
    <property type="entry name" value="Ribosomal_bL12"/>
    <property type="match status" value="1"/>
</dbReference>
<dbReference type="InterPro" id="IPR000206">
    <property type="entry name" value="Ribosomal_bL12"/>
</dbReference>
<dbReference type="InterPro" id="IPR013823">
    <property type="entry name" value="Ribosomal_bL12_C"/>
</dbReference>
<dbReference type="InterPro" id="IPR014719">
    <property type="entry name" value="Ribosomal_bL12_C/ClpS-like"/>
</dbReference>
<dbReference type="InterPro" id="IPR008932">
    <property type="entry name" value="Ribosomal_bL12_oligo"/>
</dbReference>
<dbReference type="InterPro" id="IPR036235">
    <property type="entry name" value="Ribosomal_bL12_oligo_N_sf"/>
</dbReference>
<dbReference type="NCBIfam" id="TIGR00855">
    <property type="entry name" value="L12"/>
    <property type="match status" value="1"/>
</dbReference>
<dbReference type="PANTHER" id="PTHR45987">
    <property type="entry name" value="39S RIBOSOMAL PROTEIN L12"/>
    <property type="match status" value="1"/>
</dbReference>
<dbReference type="PANTHER" id="PTHR45987:SF4">
    <property type="entry name" value="LARGE RIBOSOMAL SUBUNIT PROTEIN BL12M"/>
    <property type="match status" value="1"/>
</dbReference>
<dbReference type="Pfam" id="PF00542">
    <property type="entry name" value="Ribosomal_L12"/>
    <property type="match status" value="1"/>
</dbReference>
<dbReference type="Pfam" id="PF16320">
    <property type="entry name" value="Ribosomal_L12_N"/>
    <property type="match status" value="1"/>
</dbReference>
<dbReference type="SUPFAM" id="SSF54736">
    <property type="entry name" value="ClpS-like"/>
    <property type="match status" value="1"/>
</dbReference>
<dbReference type="SUPFAM" id="SSF48300">
    <property type="entry name" value="Ribosomal protein L7/12, oligomerisation (N-terminal) domain"/>
    <property type="match status" value="1"/>
</dbReference>
<keyword id="KW-1185">Reference proteome</keyword>
<keyword id="KW-0687">Ribonucleoprotein</keyword>
<keyword id="KW-0689">Ribosomal protein</keyword>
<comment type="function">
    <text evidence="1">Forms part of the ribosomal stalk which helps the ribosome interact with GTP-bound translation factors. Is thus essential for accurate translation.</text>
</comment>
<comment type="subunit">
    <text evidence="1">Homodimer. Part of the ribosomal stalk of the 50S ribosomal subunit. Forms a multimeric L10(L12)X complex, where L10 forms an elongated spine to which 2 to 4 L12 dimers bind in a sequential fashion. Binds GTP-bound translation factors.</text>
</comment>
<comment type="similarity">
    <text evidence="1">Belongs to the bacterial ribosomal protein bL12 family.</text>
</comment>
<reference key="1">
    <citation type="journal article" date="2008" name="J. Bacteriol.">
        <title>Complete genome sequence of uropathogenic Proteus mirabilis, a master of both adherence and motility.</title>
        <authorList>
            <person name="Pearson M.M."/>
            <person name="Sebaihia M."/>
            <person name="Churcher C."/>
            <person name="Quail M.A."/>
            <person name="Seshasayee A.S."/>
            <person name="Luscombe N.M."/>
            <person name="Abdellah Z."/>
            <person name="Arrosmith C."/>
            <person name="Atkin B."/>
            <person name="Chillingworth T."/>
            <person name="Hauser H."/>
            <person name="Jagels K."/>
            <person name="Moule S."/>
            <person name="Mungall K."/>
            <person name="Norbertczak H."/>
            <person name="Rabbinowitsch E."/>
            <person name="Walker D."/>
            <person name="Whithead S."/>
            <person name="Thomson N.R."/>
            <person name="Rather P.N."/>
            <person name="Parkhill J."/>
            <person name="Mobley H.L.T."/>
        </authorList>
    </citation>
    <scope>NUCLEOTIDE SEQUENCE [LARGE SCALE GENOMIC DNA]</scope>
    <source>
        <strain>HI4320</strain>
    </source>
</reference>